<reference key="1">
    <citation type="journal article" date="2002" name="Genome Res.">
        <title>A complete sequence of the T. tengcongensis genome.</title>
        <authorList>
            <person name="Bao Q."/>
            <person name="Tian Y."/>
            <person name="Li W."/>
            <person name="Xu Z."/>
            <person name="Xuan Z."/>
            <person name="Hu S."/>
            <person name="Dong W."/>
            <person name="Yang J."/>
            <person name="Chen Y."/>
            <person name="Xue Y."/>
            <person name="Xu Y."/>
            <person name="Lai X."/>
            <person name="Huang L."/>
            <person name="Dong X."/>
            <person name="Ma Y."/>
            <person name="Ling L."/>
            <person name="Tan H."/>
            <person name="Chen R."/>
            <person name="Wang J."/>
            <person name="Yu J."/>
            <person name="Yang H."/>
        </authorList>
    </citation>
    <scope>NUCLEOTIDE SEQUENCE [LARGE SCALE GENOMIC DNA]</scope>
    <source>
        <strain>DSM 15242 / JCM 11007 / NBRC 100824 / MB4</strain>
    </source>
</reference>
<accession>Q8RA46</accession>
<feature type="chain" id="PRO_0000182911" description="Deoxyuridine 5'-triphosphate nucleotidohydrolase">
    <location>
        <begin position="1"/>
        <end position="148"/>
    </location>
</feature>
<feature type="binding site" evidence="1">
    <location>
        <begin position="68"/>
        <end position="70"/>
    </location>
    <ligand>
        <name>substrate</name>
    </ligand>
</feature>
<feature type="binding site" evidence="1">
    <location>
        <position position="81"/>
    </location>
    <ligand>
        <name>substrate</name>
    </ligand>
</feature>
<feature type="binding site" evidence="1">
    <location>
        <begin position="85"/>
        <end position="87"/>
    </location>
    <ligand>
        <name>substrate</name>
    </ligand>
</feature>
<feature type="binding site" evidence="1">
    <location>
        <position position="95"/>
    </location>
    <ligand>
        <name>substrate</name>
    </ligand>
</feature>
<comment type="function">
    <text evidence="1">This enzyme is involved in nucleotide metabolism: it produces dUMP, the immediate precursor of thymidine nucleotides and it decreases the intracellular concentration of dUTP so that uracil cannot be incorporated into DNA.</text>
</comment>
<comment type="catalytic activity">
    <reaction evidence="1">
        <text>dUTP + H2O = dUMP + diphosphate + H(+)</text>
        <dbReference type="Rhea" id="RHEA:10248"/>
        <dbReference type="ChEBI" id="CHEBI:15377"/>
        <dbReference type="ChEBI" id="CHEBI:15378"/>
        <dbReference type="ChEBI" id="CHEBI:33019"/>
        <dbReference type="ChEBI" id="CHEBI:61555"/>
        <dbReference type="ChEBI" id="CHEBI:246422"/>
        <dbReference type="EC" id="3.6.1.23"/>
    </reaction>
</comment>
<comment type="cofactor">
    <cofactor evidence="1">
        <name>Mg(2+)</name>
        <dbReference type="ChEBI" id="CHEBI:18420"/>
    </cofactor>
</comment>
<comment type="pathway">
    <text evidence="1">Pyrimidine metabolism; dUMP biosynthesis; dUMP from dCTP (dUTP route): step 2/2.</text>
</comment>
<comment type="similarity">
    <text evidence="1">Belongs to the dUTPase family.</text>
</comment>
<organism>
    <name type="scientific">Caldanaerobacter subterraneus subsp. tengcongensis (strain DSM 15242 / JCM 11007 / NBRC 100824 / MB4)</name>
    <name type="common">Thermoanaerobacter tengcongensis</name>
    <dbReference type="NCBI Taxonomy" id="273068"/>
    <lineage>
        <taxon>Bacteria</taxon>
        <taxon>Bacillati</taxon>
        <taxon>Bacillota</taxon>
        <taxon>Clostridia</taxon>
        <taxon>Thermoanaerobacterales</taxon>
        <taxon>Thermoanaerobacteraceae</taxon>
        <taxon>Caldanaerobacter</taxon>
    </lineage>
</organism>
<proteinExistence type="inferred from homology"/>
<name>DUT_CALS4</name>
<gene>
    <name evidence="1" type="primary">dut</name>
    <name type="ordered locus">TTE1384</name>
</gene>
<keyword id="KW-0378">Hydrolase</keyword>
<keyword id="KW-0460">Magnesium</keyword>
<keyword id="KW-0479">Metal-binding</keyword>
<keyword id="KW-0546">Nucleotide metabolism</keyword>
<keyword id="KW-1185">Reference proteome</keyword>
<dbReference type="EC" id="3.6.1.23" evidence="1"/>
<dbReference type="EMBL" id="AE008691">
    <property type="protein sequence ID" value="AAM24606.1"/>
    <property type="molecule type" value="Genomic_DNA"/>
</dbReference>
<dbReference type="RefSeq" id="WP_011025672.1">
    <property type="nucleotide sequence ID" value="NC_003869.1"/>
</dbReference>
<dbReference type="SMR" id="Q8RA46"/>
<dbReference type="STRING" id="273068.TTE1384"/>
<dbReference type="KEGG" id="tte:TTE1384"/>
<dbReference type="eggNOG" id="COG0756">
    <property type="taxonomic scope" value="Bacteria"/>
</dbReference>
<dbReference type="HOGENOM" id="CLU_068508_1_2_9"/>
<dbReference type="OrthoDB" id="9809956at2"/>
<dbReference type="UniPathway" id="UPA00610">
    <property type="reaction ID" value="UER00666"/>
</dbReference>
<dbReference type="Proteomes" id="UP000000555">
    <property type="component" value="Chromosome"/>
</dbReference>
<dbReference type="GO" id="GO:0004170">
    <property type="term" value="F:dUTP diphosphatase activity"/>
    <property type="evidence" value="ECO:0007669"/>
    <property type="project" value="UniProtKB-UniRule"/>
</dbReference>
<dbReference type="GO" id="GO:0000287">
    <property type="term" value="F:magnesium ion binding"/>
    <property type="evidence" value="ECO:0007669"/>
    <property type="project" value="UniProtKB-UniRule"/>
</dbReference>
<dbReference type="GO" id="GO:0006226">
    <property type="term" value="P:dUMP biosynthetic process"/>
    <property type="evidence" value="ECO:0007669"/>
    <property type="project" value="UniProtKB-UniRule"/>
</dbReference>
<dbReference type="GO" id="GO:0046081">
    <property type="term" value="P:dUTP catabolic process"/>
    <property type="evidence" value="ECO:0007669"/>
    <property type="project" value="InterPro"/>
</dbReference>
<dbReference type="CDD" id="cd07557">
    <property type="entry name" value="trimeric_dUTPase"/>
    <property type="match status" value="1"/>
</dbReference>
<dbReference type="FunFam" id="2.70.40.10:FF:000002">
    <property type="entry name" value="dUTP diphosphatase"/>
    <property type="match status" value="1"/>
</dbReference>
<dbReference type="Gene3D" id="2.70.40.10">
    <property type="match status" value="1"/>
</dbReference>
<dbReference type="HAMAP" id="MF_00116">
    <property type="entry name" value="dUTPase_bact"/>
    <property type="match status" value="1"/>
</dbReference>
<dbReference type="InterPro" id="IPR008181">
    <property type="entry name" value="dUTPase"/>
</dbReference>
<dbReference type="InterPro" id="IPR029054">
    <property type="entry name" value="dUTPase-like"/>
</dbReference>
<dbReference type="InterPro" id="IPR036157">
    <property type="entry name" value="dUTPase-like_sf"/>
</dbReference>
<dbReference type="InterPro" id="IPR033704">
    <property type="entry name" value="dUTPase_trimeric"/>
</dbReference>
<dbReference type="NCBIfam" id="TIGR00576">
    <property type="entry name" value="dut"/>
    <property type="match status" value="1"/>
</dbReference>
<dbReference type="NCBIfam" id="NF001862">
    <property type="entry name" value="PRK00601.1"/>
    <property type="match status" value="1"/>
</dbReference>
<dbReference type="PANTHER" id="PTHR11241">
    <property type="entry name" value="DEOXYURIDINE 5'-TRIPHOSPHATE NUCLEOTIDOHYDROLASE"/>
    <property type="match status" value="1"/>
</dbReference>
<dbReference type="PANTHER" id="PTHR11241:SF0">
    <property type="entry name" value="DEOXYURIDINE 5'-TRIPHOSPHATE NUCLEOTIDOHYDROLASE"/>
    <property type="match status" value="1"/>
</dbReference>
<dbReference type="Pfam" id="PF00692">
    <property type="entry name" value="dUTPase"/>
    <property type="match status" value="1"/>
</dbReference>
<dbReference type="SUPFAM" id="SSF51283">
    <property type="entry name" value="dUTPase-like"/>
    <property type="match status" value="1"/>
</dbReference>
<evidence type="ECO:0000255" key="1">
    <source>
        <dbReference type="HAMAP-Rule" id="MF_00116"/>
    </source>
</evidence>
<sequence length="148" mass="16297">MSIVLKIKRTEDAKDLPLPAYMSEGAAGMDLYANVKGEVTINPGEVELIPTGIQIELPPNYEAQIRPRSGLALNYGITLLNTPGTVDSDYRGEIKLIVINLGKQPVTIKRGQRIAQMVINQVVRPKIIEVEELSETERMDRGFGHTGV</sequence>
<protein>
    <recommendedName>
        <fullName evidence="1">Deoxyuridine 5'-triphosphate nucleotidohydrolase</fullName>
        <shortName evidence="1">dUTPase</shortName>
        <ecNumber evidence="1">3.6.1.23</ecNumber>
    </recommendedName>
    <alternativeName>
        <fullName evidence="1">dUTP pyrophosphatase</fullName>
    </alternativeName>
</protein>